<name>RNZ_STRU0</name>
<dbReference type="EC" id="3.1.26.11" evidence="1"/>
<dbReference type="EMBL" id="AM946015">
    <property type="protein sequence ID" value="CAR42499.1"/>
    <property type="molecule type" value="Genomic_DNA"/>
</dbReference>
<dbReference type="RefSeq" id="WP_012658618.1">
    <property type="nucleotide sequence ID" value="NC_012004.1"/>
</dbReference>
<dbReference type="SMR" id="B9DUP5"/>
<dbReference type="STRING" id="218495.SUB1131"/>
<dbReference type="GeneID" id="93826410"/>
<dbReference type="KEGG" id="sub:SUB1131"/>
<dbReference type="eggNOG" id="COG1234">
    <property type="taxonomic scope" value="Bacteria"/>
</dbReference>
<dbReference type="HOGENOM" id="CLU_031317_2_0_9"/>
<dbReference type="OrthoDB" id="9800940at2"/>
<dbReference type="Proteomes" id="UP000000449">
    <property type="component" value="Chromosome"/>
</dbReference>
<dbReference type="GO" id="GO:0042781">
    <property type="term" value="F:3'-tRNA processing endoribonuclease activity"/>
    <property type="evidence" value="ECO:0007669"/>
    <property type="project" value="UniProtKB-UniRule"/>
</dbReference>
<dbReference type="GO" id="GO:0008270">
    <property type="term" value="F:zinc ion binding"/>
    <property type="evidence" value="ECO:0007669"/>
    <property type="project" value="UniProtKB-UniRule"/>
</dbReference>
<dbReference type="CDD" id="cd07717">
    <property type="entry name" value="RNaseZ_ZiPD-like_MBL-fold"/>
    <property type="match status" value="1"/>
</dbReference>
<dbReference type="FunFam" id="3.60.15.10:FF:000002">
    <property type="entry name" value="Ribonuclease Z"/>
    <property type="match status" value="1"/>
</dbReference>
<dbReference type="Gene3D" id="3.60.15.10">
    <property type="entry name" value="Ribonuclease Z/Hydroxyacylglutathione hydrolase-like"/>
    <property type="match status" value="1"/>
</dbReference>
<dbReference type="HAMAP" id="MF_01818">
    <property type="entry name" value="RNase_Z_BN"/>
    <property type="match status" value="1"/>
</dbReference>
<dbReference type="InterPro" id="IPR001279">
    <property type="entry name" value="Metallo-B-lactamas"/>
</dbReference>
<dbReference type="InterPro" id="IPR036866">
    <property type="entry name" value="RibonucZ/Hydroxyglut_hydro"/>
</dbReference>
<dbReference type="InterPro" id="IPR013471">
    <property type="entry name" value="RNase_Z/BN"/>
</dbReference>
<dbReference type="NCBIfam" id="NF000801">
    <property type="entry name" value="PRK00055.1-3"/>
    <property type="match status" value="1"/>
</dbReference>
<dbReference type="NCBIfam" id="TIGR02651">
    <property type="entry name" value="RNase_Z"/>
    <property type="match status" value="1"/>
</dbReference>
<dbReference type="PANTHER" id="PTHR46018">
    <property type="entry name" value="ZINC PHOSPHODIESTERASE ELAC PROTEIN 1"/>
    <property type="match status" value="1"/>
</dbReference>
<dbReference type="PANTHER" id="PTHR46018:SF2">
    <property type="entry name" value="ZINC PHOSPHODIESTERASE ELAC PROTEIN 1"/>
    <property type="match status" value="1"/>
</dbReference>
<dbReference type="Pfam" id="PF00753">
    <property type="entry name" value="Lactamase_B"/>
    <property type="match status" value="1"/>
</dbReference>
<dbReference type="SUPFAM" id="SSF56281">
    <property type="entry name" value="Metallo-hydrolase/oxidoreductase"/>
    <property type="match status" value="1"/>
</dbReference>
<reference key="1">
    <citation type="journal article" date="2009" name="BMC Genomics">
        <title>Evidence for niche adaptation in the genome of the bovine pathogen Streptococcus uberis.</title>
        <authorList>
            <person name="Ward P.N."/>
            <person name="Holden M.T.G."/>
            <person name="Leigh J.A."/>
            <person name="Lennard N."/>
            <person name="Bignell A."/>
            <person name="Barron A."/>
            <person name="Clark L."/>
            <person name="Quail M.A."/>
            <person name="Woodward J."/>
            <person name="Barrell B.G."/>
            <person name="Egan S.A."/>
            <person name="Field T.R."/>
            <person name="Maskell D."/>
            <person name="Kehoe M."/>
            <person name="Dowson C.G."/>
            <person name="Chanter N."/>
            <person name="Whatmore A.M."/>
            <person name="Bentley S.D."/>
            <person name="Parkhill J."/>
        </authorList>
    </citation>
    <scope>NUCLEOTIDE SEQUENCE [LARGE SCALE GENOMIC DNA]</scope>
    <source>
        <strain>ATCC BAA-854 / 0140J</strain>
    </source>
</reference>
<organism>
    <name type="scientific">Streptococcus uberis (strain ATCC BAA-854 / 0140J)</name>
    <dbReference type="NCBI Taxonomy" id="218495"/>
    <lineage>
        <taxon>Bacteria</taxon>
        <taxon>Bacillati</taxon>
        <taxon>Bacillota</taxon>
        <taxon>Bacilli</taxon>
        <taxon>Lactobacillales</taxon>
        <taxon>Streptococcaceae</taxon>
        <taxon>Streptococcus</taxon>
    </lineage>
</organism>
<feature type="chain" id="PRO_1000187997" description="Ribonuclease Z">
    <location>
        <begin position="1"/>
        <end position="309"/>
    </location>
</feature>
<feature type="active site" description="Proton acceptor" evidence="1">
    <location>
        <position position="67"/>
    </location>
</feature>
<feature type="binding site" evidence="1">
    <location>
        <position position="63"/>
    </location>
    <ligand>
        <name>Zn(2+)</name>
        <dbReference type="ChEBI" id="CHEBI:29105"/>
        <label>1</label>
        <note>catalytic</note>
    </ligand>
</feature>
<feature type="binding site" evidence="1">
    <location>
        <position position="65"/>
    </location>
    <ligand>
        <name>Zn(2+)</name>
        <dbReference type="ChEBI" id="CHEBI:29105"/>
        <label>1</label>
        <note>catalytic</note>
    </ligand>
</feature>
<feature type="binding site" evidence="1">
    <location>
        <position position="67"/>
    </location>
    <ligand>
        <name>Zn(2+)</name>
        <dbReference type="ChEBI" id="CHEBI:29105"/>
        <label>2</label>
        <note>catalytic</note>
    </ligand>
</feature>
<feature type="binding site" evidence="1">
    <location>
        <position position="68"/>
    </location>
    <ligand>
        <name>Zn(2+)</name>
        <dbReference type="ChEBI" id="CHEBI:29105"/>
        <label>2</label>
        <note>catalytic</note>
    </ligand>
</feature>
<feature type="binding site" evidence="1">
    <location>
        <position position="145"/>
    </location>
    <ligand>
        <name>Zn(2+)</name>
        <dbReference type="ChEBI" id="CHEBI:29105"/>
        <label>1</label>
        <note>catalytic</note>
    </ligand>
</feature>
<feature type="binding site" evidence="1">
    <location>
        <position position="216"/>
    </location>
    <ligand>
        <name>Zn(2+)</name>
        <dbReference type="ChEBI" id="CHEBI:29105"/>
        <label>1</label>
        <note>catalytic</note>
    </ligand>
</feature>
<feature type="binding site" evidence="1">
    <location>
        <position position="216"/>
    </location>
    <ligand>
        <name>Zn(2+)</name>
        <dbReference type="ChEBI" id="CHEBI:29105"/>
        <label>2</label>
        <note>catalytic</note>
    </ligand>
</feature>
<feature type="binding site" evidence="1">
    <location>
        <position position="274"/>
    </location>
    <ligand>
        <name>Zn(2+)</name>
        <dbReference type="ChEBI" id="CHEBI:29105"/>
        <label>2</label>
        <note>catalytic</note>
    </ligand>
</feature>
<keyword id="KW-0255">Endonuclease</keyword>
<keyword id="KW-0378">Hydrolase</keyword>
<keyword id="KW-0479">Metal-binding</keyword>
<keyword id="KW-0540">Nuclease</keyword>
<keyword id="KW-1185">Reference proteome</keyword>
<keyword id="KW-0819">tRNA processing</keyword>
<keyword id="KW-0862">Zinc</keyword>
<protein>
    <recommendedName>
        <fullName evidence="1">Ribonuclease Z</fullName>
        <shortName evidence="1">RNase Z</shortName>
        <ecNumber evidence="1">3.1.26.11</ecNumber>
    </recommendedName>
    <alternativeName>
        <fullName evidence="1">tRNA 3 endonuclease</fullName>
    </alternativeName>
    <alternativeName>
        <fullName evidence="1">tRNase Z</fullName>
    </alternativeName>
</protein>
<evidence type="ECO:0000255" key="1">
    <source>
        <dbReference type="HAMAP-Rule" id="MF_01818"/>
    </source>
</evidence>
<sequence length="309" mass="34566">MELQFLGTGAGQPAKQRNVSSLVLKLLDEINEVWMFDCGEGTQRQILETSIKPRKIQKIFITHLHGDHIFGLPGFLSSRAFQASEEQTDIEIFGPLGIKSFVQNSLAISGTRLPYKIHFHEFTDKDMGKIMETDKFLVYAEKLAHTIFCMGYRVVQKDLEGTLDAEALKKAGVPFGPLFGKIKNGQDIVLDDGRQILAKDYISEPKKGKVITILGDTRKTPASQRLALNADVLVHESTYGKGDDRIARNHGHSTNMQAAQIAKDANVKRLLLNHVSARFLSRDCRQMEKDAASLFENVKIVKDLEEVTI</sequence>
<proteinExistence type="inferred from homology"/>
<gene>
    <name evidence="1" type="primary">rnz</name>
    <name type="ordered locus">SUB1131</name>
</gene>
<comment type="function">
    <text evidence="1">Zinc phosphodiesterase, which displays some tRNA 3'-processing endonuclease activity. Probably involved in tRNA maturation, by removing a 3'-trailer from precursor tRNA.</text>
</comment>
<comment type="catalytic activity">
    <reaction evidence="1">
        <text>Endonucleolytic cleavage of RNA, removing extra 3' nucleotides from tRNA precursor, generating 3' termini of tRNAs. A 3'-hydroxy group is left at the tRNA terminus and a 5'-phosphoryl group is left at the trailer molecule.</text>
        <dbReference type="EC" id="3.1.26.11"/>
    </reaction>
</comment>
<comment type="cofactor">
    <cofactor evidence="1">
        <name>Zn(2+)</name>
        <dbReference type="ChEBI" id="CHEBI:29105"/>
    </cofactor>
    <text evidence="1">Binds 2 Zn(2+) ions.</text>
</comment>
<comment type="subunit">
    <text evidence="1">Homodimer.</text>
</comment>
<comment type="similarity">
    <text evidence="1">Belongs to the RNase Z family.</text>
</comment>
<accession>B9DUP5</accession>